<evidence type="ECO:0000255" key="1">
    <source>
        <dbReference type="HAMAP-Rule" id="MF_04065"/>
    </source>
</evidence>
<evidence type="ECO:0000256" key="2">
    <source>
        <dbReference type="SAM" id="MobiDB-lite"/>
    </source>
</evidence>
<reference key="1">
    <citation type="journal article" date="2006" name="Proc. Natl. Acad. Sci. U.S.A.">
        <title>Emergence and predominance of an H5N1 influenza variant in China.</title>
        <authorList>
            <person name="Smith G.J."/>
            <person name="Fan X.H."/>
            <person name="Wang J."/>
            <person name="Li K.S."/>
            <person name="Qin K."/>
            <person name="Zhang J.X."/>
            <person name="Vijaykrishna D."/>
            <person name="Cheung C.L."/>
            <person name="Huang K."/>
            <person name="Rayner J.M."/>
            <person name="Peiris J.S."/>
            <person name="Chen H."/>
            <person name="Webster R.G."/>
            <person name="Guan Y."/>
        </authorList>
    </citation>
    <scope>NUCLEOTIDE SEQUENCE [GENOMIC RNA]</scope>
</reference>
<accession>Q2LFH3</accession>
<feature type="chain" id="PRO_0000311172" description="RNA-directed RNA polymerase catalytic subunit">
    <location>
        <begin position="1"/>
        <end position="757"/>
    </location>
</feature>
<feature type="domain" description="RdRp catalytic" evidence="1">
    <location>
        <begin position="286"/>
        <end position="483"/>
    </location>
</feature>
<feature type="region of interest" description="Disordered" evidence="2">
    <location>
        <begin position="52"/>
        <end position="82"/>
    </location>
</feature>
<feature type="region of interest" description="Promoter-binding site" evidence="1">
    <location>
        <begin position="249"/>
        <end position="256"/>
    </location>
</feature>
<feature type="short sequence motif" description="Nuclear localization signal" evidence="1">
    <location>
        <begin position="187"/>
        <end position="195"/>
    </location>
</feature>
<feature type="short sequence motif" description="Nuclear localization signal" evidence="1">
    <location>
        <begin position="203"/>
        <end position="216"/>
    </location>
</feature>
<feature type="compositionally biased region" description="Polar residues" evidence="2">
    <location>
        <begin position="55"/>
        <end position="64"/>
    </location>
</feature>
<keyword id="KW-1262">Eukaryotic host gene expression shutoff by virus</keyword>
<keyword id="KW-1191">Eukaryotic host transcription shutoff by virus</keyword>
<keyword id="KW-1035">Host cytoplasm</keyword>
<keyword id="KW-1190">Host gene expression shutoff by virus</keyword>
<keyword id="KW-1048">Host nucleus</keyword>
<keyword id="KW-0945">Host-virus interaction</keyword>
<keyword id="KW-1104">Inhibition of host RNA polymerase II by virus</keyword>
<keyword id="KW-0547">Nucleotide-binding</keyword>
<keyword id="KW-0548">Nucleotidyltransferase</keyword>
<keyword id="KW-0597">Phosphoprotein</keyword>
<keyword id="KW-0696">RNA-directed RNA polymerase</keyword>
<keyword id="KW-0808">Transferase</keyword>
<keyword id="KW-0693">Viral RNA replication</keyword>
<keyword id="KW-1195">Viral transcription</keyword>
<name>RDRP_I05A1</name>
<gene>
    <name evidence="1" type="primary">PB1</name>
</gene>
<proteinExistence type="inferred from homology"/>
<organismHost>
    <name type="scientific">Aves</name>
    <dbReference type="NCBI Taxonomy" id="8782"/>
</organismHost>
<organismHost>
    <name type="scientific">Felis catus</name>
    <name type="common">Cat</name>
    <name type="synonym">Felis silvestris catus</name>
    <dbReference type="NCBI Taxonomy" id="9685"/>
</organismHost>
<organismHost>
    <name type="scientific">Homo sapiens</name>
    <name type="common">Human</name>
    <dbReference type="NCBI Taxonomy" id="9606"/>
</organismHost>
<organismHost>
    <name type="scientific">Panthera pardus</name>
    <name type="common">Leopard</name>
    <name type="synonym">Felis pardus</name>
    <dbReference type="NCBI Taxonomy" id="9691"/>
</organismHost>
<organismHost>
    <name type="scientific">Panthera tigris</name>
    <name type="common">Tiger</name>
    <dbReference type="NCBI Taxonomy" id="9694"/>
</organismHost>
<organismHost>
    <name type="scientific">Sus scrofa</name>
    <name type="common">Pig</name>
    <dbReference type="NCBI Taxonomy" id="9823"/>
</organismHost>
<sequence>MDVNPTLLFLKVPVQNAISTTFPYTGDPPYSHGTGTGYTMDTVNRTHQYSEKGKWTTNTETGAPQLNPIDGPLPEDNEPSGYAQTDCVLEAMAFLENSHPGIFENSCLETMEIVQQTRVDKLTQGRQTYDWTLNRNQPAATALANTIEIFRSNGLTANESGRLIDFLKDVMESMDKEEMEITTHFHRKRRVRDNMTKKMVTQRTIGKKKQRLNKKSYLIRALTLNTMTKDAERGKLKRRAIATPGMQIRGFVYFVETLARSICEKLEQSGLPVGGNEKKAKLANVVRKMMTNSQDTELSFTITGDNTKWNENQNPRMFLAMITYITRNQPEWFRNVLSIAPIMFSNKMARLGKGYMFESKSMKLRTQIPAEMLANIDLKYFNELTKKKIEKIRPLLIDGTASLSPGMMMGMFNMLSTVLGVSILNLGQKRYTKTTYWWDGLQSSDDFALIVNAPNHEGIQAGVDRFYRTCKLVGINMSKKKSYINRTGTFEFTSFFYRYGFVANFSMELPSFGVSGINESADMSIGVTVIKNNMINNDLGPATAQMALQLFIKDYRYTYRCHRGDTQIQTRRSFELKKLWEQTRSKAGLLVSDGGPNLYNIRNLHIPEVCLKWELMDEDYQGRLCNPLNPFVSHKEIESVNNAVVMPAHGPAKSMEYDAVATTHSWIPKRNRSILNTSQRGILEDEQMYQKCCNLFEKFFPSSSYRRPVGISSMVEAMVSRARIDARIDFESGRIKKEEFAEIMKICSTIEELRRQK</sequence>
<organism>
    <name type="scientific">Influenza A virus (strain A/Goose/Guangxi/345/2005 H5N1 genotype G)</name>
    <dbReference type="NCBI Taxonomy" id="365089"/>
    <lineage>
        <taxon>Viruses</taxon>
        <taxon>Riboviria</taxon>
        <taxon>Orthornavirae</taxon>
        <taxon>Negarnaviricota</taxon>
        <taxon>Polyploviricotina</taxon>
        <taxon>Insthoviricetes</taxon>
        <taxon>Articulavirales</taxon>
        <taxon>Orthomyxoviridae</taxon>
        <taxon>Alphainfluenzavirus</taxon>
        <taxon>Alphainfluenzavirus influenzae</taxon>
        <taxon>Influenza A virus</taxon>
    </lineage>
</organism>
<comment type="function">
    <text evidence="1">RNA-dependent RNA polymerase which is responsible for replication and transcription of virus RNA segments. The transcription of viral mRNAs occurs by a unique mechanism called cap-snatching. 5' methylated caps of cellular mRNAs are cleaved after 10-13 nucleotides by PA. In turn, these short capped RNAs are used as primers by PB1 for transcription of viral mRNAs. During virus replication, PB1 initiates RNA synthesis and copy vRNA into complementary RNA (cRNA) which in turn serves as a template for the production of more vRNAs.</text>
</comment>
<comment type="catalytic activity">
    <reaction evidence="1">
        <text>RNA(n) + a ribonucleoside 5'-triphosphate = RNA(n+1) + diphosphate</text>
        <dbReference type="Rhea" id="RHEA:21248"/>
        <dbReference type="Rhea" id="RHEA-COMP:14527"/>
        <dbReference type="Rhea" id="RHEA-COMP:17342"/>
        <dbReference type="ChEBI" id="CHEBI:33019"/>
        <dbReference type="ChEBI" id="CHEBI:61557"/>
        <dbReference type="ChEBI" id="CHEBI:140395"/>
        <dbReference type="EC" id="2.7.7.48"/>
    </reaction>
</comment>
<comment type="subunit">
    <text evidence="1">Influenza RNA polymerase is composed of three subunits: PB1, PB2 and PA. Interacts (via N-terminus) with PA (via C-terminus). Interacts (via C-terminus) with PB2 (via N-terminus); this interaction is essential for transcription initiation.</text>
</comment>
<comment type="subcellular location">
    <subcellularLocation>
        <location evidence="1">Host nucleus</location>
    </subcellularLocation>
    <subcellularLocation>
        <location evidence="1">Host cytoplasm</location>
    </subcellularLocation>
</comment>
<comment type="PTM">
    <text evidence="1">Phosphorylated by host PRKCA.</text>
</comment>
<comment type="similarity">
    <text evidence="1">Belongs to the influenza viruses polymerase PB1 family.</text>
</comment>
<protein>
    <recommendedName>
        <fullName evidence="1">RNA-directed RNA polymerase catalytic subunit</fullName>
        <ecNumber evidence="1">2.7.7.48</ecNumber>
    </recommendedName>
    <alternativeName>
        <fullName evidence="1">Polymerase basic protein 1</fullName>
        <shortName evidence="1">PB1</shortName>
    </alternativeName>
    <alternativeName>
        <fullName evidence="1">RNA-directed RNA polymerase subunit P1</fullName>
    </alternativeName>
</protein>
<dbReference type="EC" id="2.7.7.48" evidence="1"/>
<dbReference type="EMBL" id="DQ321291">
    <property type="protein sequence ID" value="ABC66801.1"/>
    <property type="molecule type" value="Genomic_RNA"/>
</dbReference>
<dbReference type="SMR" id="Q2LFH3"/>
<dbReference type="GO" id="GO:0030430">
    <property type="term" value="C:host cell cytoplasm"/>
    <property type="evidence" value="ECO:0007669"/>
    <property type="project" value="UniProtKB-SubCell"/>
</dbReference>
<dbReference type="GO" id="GO:0042025">
    <property type="term" value="C:host cell nucleus"/>
    <property type="evidence" value="ECO:0007669"/>
    <property type="project" value="UniProtKB-SubCell"/>
</dbReference>
<dbReference type="GO" id="GO:0000166">
    <property type="term" value="F:nucleotide binding"/>
    <property type="evidence" value="ECO:0007669"/>
    <property type="project" value="UniProtKB-UniRule"/>
</dbReference>
<dbReference type="GO" id="GO:0003723">
    <property type="term" value="F:RNA binding"/>
    <property type="evidence" value="ECO:0007669"/>
    <property type="project" value="InterPro"/>
</dbReference>
<dbReference type="GO" id="GO:0003968">
    <property type="term" value="F:RNA-directed RNA polymerase activity"/>
    <property type="evidence" value="ECO:0007669"/>
    <property type="project" value="UniProtKB-UniRule"/>
</dbReference>
<dbReference type="GO" id="GO:0006351">
    <property type="term" value="P:DNA-templated transcription"/>
    <property type="evidence" value="ECO:0007669"/>
    <property type="project" value="UniProtKB-UniRule"/>
</dbReference>
<dbReference type="GO" id="GO:0039657">
    <property type="term" value="P:symbiont-mediated suppression of host gene expression"/>
    <property type="evidence" value="ECO:0007669"/>
    <property type="project" value="UniProtKB-KW"/>
</dbReference>
<dbReference type="GO" id="GO:0039523">
    <property type="term" value="P:symbiont-mediated suppression of host mRNA transcription via inhibition of RNA polymerase II activity"/>
    <property type="evidence" value="ECO:0007669"/>
    <property type="project" value="UniProtKB-UniRule"/>
</dbReference>
<dbReference type="GO" id="GO:0039694">
    <property type="term" value="P:viral RNA genome replication"/>
    <property type="evidence" value="ECO:0007669"/>
    <property type="project" value="UniProtKB-UniRule"/>
</dbReference>
<dbReference type="GO" id="GO:0019083">
    <property type="term" value="P:viral transcription"/>
    <property type="evidence" value="ECO:0007669"/>
    <property type="project" value="UniProtKB-KW"/>
</dbReference>
<dbReference type="Gene3D" id="6.10.140.720">
    <property type="match status" value="1"/>
</dbReference>
<dbReference type="HAMAP" id="MF_04065">
    <property type="entry name" value="INFV_RDRP"/>
    <property type="match status" value="1"/>
</dbReference>
<dbReference type="InterPro" id="IPR007099">
    <property type="entry name" value="RNA-dir_pol_NSvirus"/>
</dbReference>
<dbReference type="InterPro" id="IPR001407">
    <property type="entry name" value="RNA_pol_PB1_influenza"/>
</dbReference>
<dbReference type="Pfam" id="PF00602">
    <property type="entry name" value="Flu_PB1"/>
    <property type="match status" value="1"/>
</dbReference>
<dbReference type="PIRSF" id="PIRSF000827">
    <property type="entry name" value="RdRPol_OMV"/>
    <property type="match status" value="1"/>
</dbReference>
<dbReference type="PROSITE" id="PS50525">
    <property type="entry name" value="RDRP_SSRNA_NEG_SEG"/>
    <property type="match status" value="1"/>
</dbReference>